<gene>
    <name evidence="1" type="primary">rnhB</name>
    <name type="ordered locus">BBta_2343</name>
</gene>
<evidence type="ECO:0000255" key="1">
    <source>
        <dbReference type="HAMAP-Rule" id="MF_00052"/>
    </source>
</evidence>
<evidence type="ECO:0000255" key="2">
    <source>
        <dbReference type="PROSITE-ProRule" id="PRU01319"/>
    </source>
</evidence>
<evidence type="ECO:0000256" key="3">
    <source>
        <dbReference type="SAM" id="MobiDB-lite"/>
    </source>
</evidence>
<evidence type="ECO:0000305" key="4"/>
<reference key="1">
    <citation type="journal article" date="2007" name="Science">
        <title>Legumes symbioses: absence of nod genes in photosynthetic bradyrhizobia.</title>
        <authorList>
            <person name="Giraud E."/>
            <person name="Moulin L."/>
            <person name="Vallenet D."/>
            <person name="Barbe V."/>
            <person name="Cytryn E."/>
            <person name="Avarre J.-C."/>
            <person name="Jaubert M."/>
            <person name="Simon D."/>
            <person name="Cartieaux F."/>
            <person name="Prin Y."/>
            <person name="Bena G."/>
            <person name="Hannibal L."/>
            <person name="Fardoux J."/>
            <person name="Kojadinovic M."/>
            <person name="Vuillet L."/>
            <person name="Lajus A."/>
            <person name="Cruveiller S."/>
            <person name="Rouy Z."/>
            <person name="Mangenot S."/>
            <person name="Segurens B."/>
            <person name="Dossat C."/>
            <person name="Franck W.L."/>
            <person name="Chang W.-S."/>
            <person name="Saunders E."/>
            <person name="Bruce D."/>
            <person name="Richardson P."/>
            <person name="Normand P."/>
            <person name="Dreyfus B."/>
            <person name="Pignol D."/>
            <person name="Stacey G."/>
            <person name="Emerich D."/>
            <person name="Vermeglio A."/>
            <person name="Medigue C."/>
            <person name="Sadowsky M."/>
        </authorList>
    </citation>
    <scope>NUCLEOTIDE SEQUENCE [LARGE SCALE GENOMIC DNA]</scope>
    <source>
        <strain>BTAi1 / ATCC BAA-1182</strain>
    </source>
</reference>
<feature type="chain" id="PRO_0000334866" description="Ribonuclease HII">
    <location>
        <begin position="1"/>
        <end position="289"/>
    </location>
</feature>
<feature type="domain" description="RNase H type-2" evidence="2">
    <location>
        <begin position="76"/>
        <end position="264"/>
    </location>
</feature>
<feature type="region of interest" description="Disordered" evidence="3">
    <location>
        <begin position="1"/>
        <end position="55"/>
    </location>
</feature>
<feature type="compositionally biased region" description="Low complexity" evidence="3">
    <location>
        <begin position="7"/>
        <end position="24"/>
    </location>
</feature>
<feature type="compositionally biased region" description="Low complexity" evidence="3">
    <location>
        <begin position="31"/>
        <end position="55"/>
    </location>
</feature>
<feature type="binding site" evidence="1">
    <location>
        <position position="82"/>
    </location>
    <ligand>
        <name>a divalent metal cation</name>
        <dbReference type="ChEBI" id="CHEBI:60240"/>
    </ligand>
</feature>
<feature type="binding site" evidence="1">
    <location>
        <position position="83"/>
    </location>
    <ligand>
        <name>a divalent metal cation</name>
        <dbReference type="ChEBI" id="CHEBI:60240"/>
    </ligand>
</feature>
<feature type="binding site" evidence="1">
    <location>
        <position position="173"/>
    </location>
    <ligand>
        <name>a divalent metal cation</name>
        <dbReference type="ChEBI" id="CHEBI:60240"/>
    </ligand>
</feature>
<keyword id="KW-0963">Cytoplasm</keyword>
<keyword id="KW-0255">Endonuclease</keyword>
<keyword id="KW-0378">Hydrolase</keyword>
<keyword id="KW-0464">Manganese</keyword>
<keyword id="KW-0479">Metal-binding</keyword>
<keyword id="KW-0540">Nuclease</keyword>
<keyword id="KW-1185">Reference proteome</keyword>
<protein>
    <recommendedName>
        <fullName evidence="1">Ribonuclease HII</fullName>
        <shortName evidence="1">RNase HII</shortName>
        <ecNumber evidence="1">3.1.26.4</ecNumber>
    </recommendedName>
</protein>
<comment type="function">
    <text evidence="1">Endonuclease that specifically degrades the RNA of RNA-DNA hybrids.</text>
</comment>
<comment type="catalytic activity">
    <reaction evidence="1">
        <text>Endonucleolytic cleavage to 5'-phosphomonoester.</text>
        <dbReference type="EC" id="3.1.26.4"/>
    </reaction>
</comment>
<comment type="cofactor">
    <cofactor evidence="1">
        <name>Mn(2+)</name>
        <dbReference type="ChEBI" id="CHEBI:29035"/>
    </cofactor>
    <cofactor evidence="1">
        <name>Mg(2+)</name>
        <dbReference type="ChEBI" id="CHEBI:18420"/>
    </cofactor>
    <text evidence="1">Manganese or magnesium. Binds 1 divalent metal ion per monomer in the absence of substrate. May bind a second metal ion after substrate binding.</text>
</comment>
<comment type="subcellular location">
    <subcellularLocation>
        <location evidence="1">Cytoplasm</location>
    </subcellularLocation>
</comment>
<comment type="similarity">
    <text evidence="1">Belongs to the RNase HII family.</text>
</comment>
<comment type="sequence caution" evidence="4">
    <conflict type="erroneous initiation">
        <sequence resource="EMBL-CDS" id="ABQ34515"/>
    </conflict>
</comment>
<proteinExistence type="inferred from homology"/>
<organism>
    <name type="scientific">Bradyrhizobium sp. (strain BTAi1 / ATCC BAA-1182)</name>
    <dbReference type="NCBI Taxonomy" id="288000"/>
    <lineage>
        <taxon>Bacteria</taxon>
        <taxon>Pseudomonadati</taxon>
        <taxon>Pseudomonadota</taxon>
        <taxon>Alphaproteobacteria</taxon>
        <taxon>Hyphomicrobiales</taxon>
        <taxon>Nitrobacteraceae</taxon>
        <taxon>Bradyrhizobium</taxon>
    </lineage>
</organism>
<sequence length="289" mass="30163">MIRDQAKTPGRAKSAAAAKASPAAKGGGNEAAQSAAGKAAAKPAAKPATSKSGKGVIAVAPPSFRRERALLKQGIWPVAGCDEAGRGPLAGPVVAAAVILDPNRIPKGLDDSKRLSAEQREALFDKICKTSAFAVAFASPARIDRDNILRASLWALSRAVRALPEAPKHVFVDGRDRIDVDCHCEAVIGGDGLVMSIAAASIVAKVTRDRLMCALAQDCPGYGFEQHKGYGVPEHLAALDRLGPSVHHRSLFAPVVAARRKHQPWADVPEPDLFADVTVVTSSEIALGA</sequence>
<accession>A5EEC1</accession>
<dbReference type="EC" id="3.1.26.4" evidence="1"/>
<dbReference type="EMBL" id="CP000494">
    <property type="protein sequence ID" value="ABQ34515.1"/>
    <property type="status" value="ALT_INIT"/>
    <property type="molecule type" value="Genomic_DNA"/>
</dbReference>
<dbReference type="RefSeq" id="WP_012042543.1">
    <property type="nucleotide sequence ID" value="NC_009485.1"/>
</dbReference>
<dbReference type="SMR" id="A5EEC1"/>
<dbReference type="STRING" id="288000.BBta_2343"/>
<dbReference type="KEGG" id="bbt:BBta_2343"/>
<dbReference type="eggNOG" id="COG0164">
    <property type="taxonomic scope" value="Bacteria"/>
</dbReference>
<dbReference type="HOGENOM" id="CLU_036532_2_2_5"/>
<dbReference type="OrthoDB" id="9803420at2"/>
<dbReference type="Proteomes" id="UP000000246">
    <property type="component" value="Chromosome"/>
</dbReference>
<dbReference type="GO" id="GO:0005737">
    <property type="term" value="C:cytoplasm"/>
    <property type="evidence" value="ECO:0007669"/>
    <property type="project" value="UniProtKB-SubCell"/>
</dbReference>
<dbReference type="GO" id="GO:0032299">
    <property type="term" value="C:ribonuclease H2 complex"/>
    <property type="evidence" value="ECO:0007669"/>
    <property type="project" value="TreeGrafter"/>
</dbReference>
<dbReference type="GO" id="GO:0030145">
    <property type="term" value="F:manganese ion binding"/>
    <property type="evidence" value="ECO:0007669"/>
    <property type="project" value="UniProtKB-UniRule"/>
</dbReference>
<dbReference type="GO" id="GO:0003723">
    <property type="term" value="F:RNA binding"/>
    <property type="evidence" value="ECO:0007669"/>
    <property type="project" value="InterPro"/>
</dbReference>
<dbReference type="GO" id="GO:0004523">
    <property type="term" value="F:RNA-DNA hybrid ribonuclease activity"/>
    <property type="evidence" value="ECO:0007669"/>
    <property type="project" value="UniProtKB-UniRule"/>
</dbReference>
<dbReference type="GO" id="GO:0043137">
    <property type="term" value="P:DNA replication, removal of RNA primer"/>
    <property type="evidence" value="ECO:0007669"/>
    <property type="project" value="TreeGrafter"/>
</dbReference>
<dbReference type="GO" id="GO:0006298">
    <property type="term" value="P:mismatch repair"/>
    <property type="evidence" value="ECO:0007669"/>
    <property type="project" value="TreeGrafter"/>
</dbReference>
<dbReference type="CDD" id="cd07182">
    <property type="entry name" value="RNase_HII_bacteria_HII_like"/>
    <property type="match status" value="1"/>
</dbReference>
<dbReference type="FunFam" id="3.30.420.10:FF:000078">
    <property type="entry name" value="Ribonuclease HII"/>
    <property type="match status" value="1"/>
</dbReference>
<dbReference type="Gene3D" id="3.30.420.10">
    <property type="entry name" value="Ribonuclease H-like superfamily/Ribonuclease H"/>
    <property type="match status" value="1"/>
</dbReference>
<dbReference type="HAMAP" id="MF_00052_B">
    <property type="entry name" value="RNase_HII_B"/>
    <property type="match status" value="1"/>
</dbReference>
<dbReference type="InterPro" id="IPR022898">
    <property type="entry name" value="RNase_HII"/>
</dbReference>
<dbReference type="InterPro" id="IPR001352">
    <property type="entry name" value="RNase_HII/HIII"/>
</dbReference>
<dbReference type="InterPro" id="IPR024567">
    <property type="entry name" value="RNase_HII/HIII_dom"/>
</dbReference>
<dbReference type="InterPro" id="IPR012337">
    <property type="entry name" value="RNaseH-like_sf"/>
</dbReference>
<dbReference type="InterPro" id="IPR036397">
    <property type="entry name" value="RNaseH_sf"/>
</dbReference>
<dbReference type="NCBIfam" id="NF000595">
    <property type="entry name" value="PRK00015.1-3"/>
    <property type="match status" value="1"/>
</dbReference>
<dbReference type="PANTHER" id="PTHR10954">
    <property type="entry name" value="RIBONUCLEASE H2 SUBUNIT A"/>
    <property type="match status" value="1"/>
</dbReference>
<dbReference type="PANTHER" id="PTHR10954:SF18">
    <property type="entry name" value="RIBONUCLEASE HII"/>
    <property type="match status" value="1"/>
</dbReference>
<dbReference type="Pfam" id="PF01351">
    <property type="entry name" value="RNase_HII"/>
    <property type="match status" value="1"/>
</dbReference>
<dbReference type="SUPFAM" id="SSF53098">
    <property type="entry name" value="Ribonuclease H-like"/>
    <property type="match status" value="1"/>
</dbReference>
<dbReference type="PROSITE" id="PS51975">
    <property type="entry name" value="RNASE_H_2"/>
    <property type="match status" value="1"/>
</dbReference>
<name>RNH2_BRASB</name>